<name>CLPX_CHLMU</name>
<keyword id="KW-0067">ATP-binding</keyword>
<keyword id="KW-0143">Chaperone</keyword>
<keyword id="KW-0479">Metal-binding</keyword>
<keyword id="KW-0547">Nucleotide-binding</keyword>
<keyword id="KW-0862">Zinc</keyword>
<dbReference type="EMBL" id="AE002160">
    <property type="protein sequence ID" value="AAF38960.1"/>
    <property type="molecule type" value="Genomic_DNA"/>
</dbReference>
<dbReference type="PIR" id="C81744">
    <property type="entry name" value="C81744"/>
</dbReference>
<dbReference type="RefSeq" id="WP_010229310.1">
    <property type="nucleotide sequence ID" value="NZ_CP063055.1"/>
</dbReference>
<dbReference type="SMR" id="Q9PLM1"/>
<dbReference type="GeneID" id="1245607"/>
<dbReference type="KEGG" id="cmu:TC_0078"/>
<dbReference type="eggNOG" id="COG1219">
    <property type="taxonomic scope" value="Bacteria"/>
</dbReference>
<dbReference type="HOGENOM" id="CLU_014218_8_2_0"/>
<dbReference type="OrthoDB" id="9804062at2"/>
<dbReference type="Proteomes" id="UP000000800">
    <property type="component" value="Chromosome"/>
</dbReference>
<dbReference type="GO" id="GO:0009376">
    <property type="term" value="C:HslUV protease complex"/>
    <property type="evidence" value="ECO:0007669"/>
    <property type="project" value="TreeGrafter"/>
</dbReference>
<dbReference type="GO" id="GO:0005524">
    <property type="term" value="F:ATP binding"/>
    <property type="evidence" value="ECO:0007669"/>
    <property type="project" value="UniProtKB-UniRule"/>
</dbReference>
<dbReference type="GO" id="GO:0016887">
    <property type="term" value="F:ATP hydrolysis activity"/>
    <property type="evidence" value="ECO:0007669"/>
    <property type="project" value="InterPro"/>
</dbReference>
<dbReference type="GO" id="GO:0140662">
    <property type="term" value="F:ATP-dependent protein folding chaperone"/>
    <property type="evidence" value="ECO:0007669"/>
    <property type="project" value="InterPro"/>
</dbReference>
<dbReference type="GO" id="GO:0046983">
    <property type="term" value="F:protein dimerization activity"/>
    <property type="evidence" value="ECO:0007669"/>
    <property type="project" value="InterPro"/>
</dbReference>
<dbReference type="GO" id="GO:0051082">
    <property type="term" value="F:unfolded protein binding"/>
    <property type="evidence" value="ECO:0007669"/>
    <property type="project" value="UniProtKB-UniRule"/>
</dbReference>
<dbReference type="GO" id="GO:0008270">
    <property type="term" value="F:zinc ion binding"/>
    <property type="evidence" value="ECO:0007669"/>
    <property type="project" value="InterPro"/>
</dbReference>
<dbReference type="GO" id="GO:0051301">
    <property type="term" value="P:cell division"/>
    <property type="evidence" value="ECO:0007669"/>
    <property type="project" value="TreeGrafter"/>
</dbReference>
<dbReference type="GO" id="GO:0051603">
    <property type="term" value="P:proteolysis involved in protein catabolic process"/>
    <property type="evidence" value="ECO:0007669"/>
    <property type="project" value="TreeGrafter"/>
</dbReference>
<dbReference type="CDD" id="cd19497">
    <property type="entry name" value="RecA-like_ClpX"/>
    <property type="match status" value="1"/>
</dbReference>
<dbReference type="FunFam" id="1.10.8.60:FF:000002">
    <property type="entry name" value="ATP-dependent Clp protease ATP-binding subunit ClpX"/>
    <property type="match status" value="1"/>
</dbReference>
<dbReference type="FunFam" id="3.40.50.300:FF:000005">
    <property type="entry name" value="ATP-dependent Clp protease ATP-binding subunit ClpX"/>
    <property type="match status" value="1"/>
</dbReference>
<dbReference type="Gene3D" id="1.10.8.60">
    <property type="match status" value="1"/>
</dbReference>
<dbReference type="Gene3D" id="6.20.220.10">
    <property type="entry name" value="ClpX chaperone, C4-type zinc finger domain"/>
    <property type="match status" value="1"/>
</dbReference>
<dbReference type="Gene3D" id="3.40.50.300">
    <property type="entry name" value="P-loop containing nucleotide triphosphate hydrolases"/>
    <property type="match status" value="1"/>
</dbReference>
<dbReference type="HAMAP" id="MF_00175">
    <property type="entry name" value="ClpX"/>
    <property type="match status" value="1"/>
</dbReference>
<dbReference type="InterPro" id="IPR003593">
    <property type="entry name" value="AAA+_ATPase"/>
</dbReference>
<dbReference type="InterPro" id="IPR050052">
    <property type="entry name" value="ATP-dep_Clp_protease_ClpX"/>
</dbReference>
<dbReference type="InterPro" id="IPR003959">
    <property type="entry name" value="ATPase_AAA_core"/>
</dbReference>
<dbReference type="InterPro" id="IPR019489">
    <property type="entry name" value="Clp_ATPase_C"/>
</dbReference>
<dbReference type="InterPro" id="IPR004487">
    <property type="entry name" value="Clp_protease_ATP-bd_su_ClpX"/>
</dbReference>
<dbReference type="InterPro" id="IPR046425">
    <property type="entry name" value="ClpX_bact"/>
</dbReference>
<dbReference type="InterPro" id="IPR027417">
    <property type="entry name" value="P-loop_NTPase"/>
</dbReference>
<dbReference type="InterPro" id="IPR010603">
    <property type="entry name" value="Znf_CppX_C4"/>
</dbReference>
<dbReference type="InterPro" id="IPR038366">
    <property type="entry name" value="Znf_CppX_C4_sf"/>
</dbReference>
<dbReference type="NCBIfam" id="TIGR00382">
    <property type="entry name" value="clpX"/>
    <property type="match status" value="1"/>
</dbReference>
<dbReference type="NCBIfam" id="NF003745">
    <property type="entry name" value="PRK05342.1"/>
    <property type="match status" value="1"/>
</dbReference>
<dbReference type="PANTHER" id="PTHR48102:SF7">
    <property type="entry name" value="ATP-DEPENDENT CLP PROTEASE ATP-BINDING SUBUNIT CLPX-LIKE, MITOCHONDRIAL"/>
    <property type="match status" value="1"/>
</dbReference>
<dbReference type="PANTHER" id="PTHR48102">
    <property type="entry name" value="ATP-DEPENDENT CLP PROTEASE ATP-BINDING SUBUNIT CLPX-LIKE, MITOCHONDRIAL-RELATED"/>
    <property type="match status" value="1"/>
</dbReference>
<dbReference type="Pfam" id="PF07724">
    <property type="entry name" value="AAA_2"/>
    <property type="match status" value="1"/>
</dbReference>
<dbReference type="Pfam" id="PF10431">
    <property type="entry name" value="ClpB_D2-small"/>
    <property type="match status" value="1"/>
</dbReference>
<dbReference type="Pfam" id="PF06689">
    <property type="entry name" value="zf-C4_ClpX"/>
    <property type="match status" value="1"/>
</dbReference>
<dbReference type="SMART" id="SM00382">
    <property type="entry name" value="AAA"/>
    <property type="match status" value="1"/>
</dbReference>
<dbReference type="SMART" id="SM01086">
    <property type="entry name" value="ClpB_D2-small"/>
    <property type="match status" value="1"/>
</dbReference>
<dbReference type="SMART" id="SM00994">
    <property type="entry name" value="zf-C4_ClpX"/>
    <property type="match status" value="1"/>
</dbReference>
<dbReference type="SUPFAM" id="SSF57716">
    <property type="entry name" value="Glucocorticoid receptor-like (DNA-binding domain)"/>
    <property type="match status" value="1"/>
</dbReference>
<dbReference type="SUPFAM" id="SSF52540">
    <property type="entry name" value="P-loop containing nucleoside triphosphate hydrolases"/>
    <property type="match status" value="1"/>
</dbReference>
<dbReference type="PROSITE" id="PS51902">
    <property type="entry name" value="CLPX_ZB"/>
    <property type="match status" value="1"/>
</dbReference>
<protein>
    <recommendedName>
        <fullName evidence="1">ATP-dependent Clp protease ATP-binding subunit ClpX</fullName>
    </recommendedName>
</protein>
<gene>
    <name evidence="1" type="primary">clpX</name>
    <name type="ordered locus">TC_0078</name>
</gene>
<comment type="function">
    <text evidence="1">ATP-dependent specificity component of the Clp protease. It directs the protease to specific substrates. Can perform chaperone functions in the absence of ClpP.</text>
</comment>
<comment type="subunit">
    <text evidence="1">Component of the ClpX-ClpP complex. Forms a hexameric ring that, in the presence of ATP, binds to fourteen ClpP subunits assembled into a disk-like structure with a central cavity, resembling the structure of eukaryotic proteasomes.</text>
</comment>
<comment type="similarity">
    <text evidence="1">Belongs to the ClpX chaperone family.</text>
</comment>
<sequence length="419" mass="46189">MTKKNLAICSFCGRSEKDVEKLIAGPSVYICDYCIKLCSGILDKTPTPAAQEVSTSQTAPQTSLKVLTPKEIKRHIDSYVVGQERAKKTISVAVYNHYKRIRALMQDKQVSYGKSNVLLLGPTGSGKTLIAKTLAKILDVPFTIADATTLTEAGYVGEDVENIVLRLLQAADYDVARAERGIIYIDEIDKIGRTTANVSITRDVSGEGVQQALLKIIEGTVANIPPKGGRKHPNQEYIRVNTENILFIVGGAFVNLDKIIAKRLGRTTIGFSEETDLAVTDRDRLLAKVETEDLIAFGMIPEFIGRFNCIVNCEELTLDELVEILTEPANAIVKQYTELFAEENVKLIFEKEALYAIAQKAKQAKTGARALGMILENLLRDLMFEIPSDPTVESIRIEEDTITQNKSPVIIQRSPEAIA</sequence>
<accession>Q9PLM1</accession>
<evidence type="ECO:0000255" key="1">
    <source>
        <dbReference type="HAMAP-Rule" id="MF_00175"/>
    </source>
</evidence>
<evidence type="ECO:0000255" key="2">
    <source>
        <dbReference type="PROSITE-ProRule" id="PRU01250"/>
    </source>
</evidence>
<reference key="1">
    <citation type="journal article" date="2000" name="Nucleic Acids Res.">
        <title>Genome sequences of Chlamydia trachomatis MoPn and Chlamydia pneumoniae AR39.</title>
        <authorList>
            <person name="Read T.D."/>
            <person name="Brunham R.C."/>
            <person name="Shen C."/>
            <person name="Gill S.R."/>
            <person name="Heidelberg J.F."/>
            <person name="White O."/>
            <person name="Hickey E.K."/>
            <person name="Peterson J.D."/>
            <person name="Utterback T.R."/>
            <person name="Berry K.J."/>
            <person name="Bass S."/>
            <person name="Linher K.D."/>
            <person name="Weidman J.F."/>
            <person name="Khouri H.M."/>
            <person name="Craven B."/>
            <person name="Bowman C."/>
            <person name="Dodson R.J."/>
            <person name="Gwinn M.L."/>
            <person name="Nelson W.C."/>
            <person name="DeBoy R.T."/>
            <person name="Kolonay J.F."/>
            <person name="McClarty G."/>
            <person name="Salzberg S.L."/>
            <person name="Eisen J.A."/>
            <person name="Fraser C.M."/>
        </authorList>
    </citation>
    <scope>NUCLEOTIDE SEQUENCE [LARGE SCALE GENOMIC DNA]</scope>
    <source>
        <strain>MoPn / Nigg</strain>
    </source>
</reference>
<proteinExistence type="inferred from homology"/>
<feature type="chain" id="PRO_0000160337" description="ATP-dependent Clp protease ATP-binding subunit ClpX">
    <location>
        <begin position="1"/>
        <end position="419"/>
    </location>
</feature>
<feature type="domain" description="ClpX-type ZB" evidence="2">
    <location>
        <begin position="1"/>
        <end position="50"/>
    </location>
</feature>
<feature type="binding site" evidence="2">
    <location>
        <position position="9"/>
    </location>
    <ligand>
        <name>Zn(2+)</name>
        <dbReference type="ChEBI" id="CHEBI:29105"/>
    </ligand>
</feature>
<feature type="binding site" evidence="2">
    <location>
        <position position="12"/>
    </location>
    <ligand>
        <name>Zn(2+)</name>
        <dbReference type="ChEBI" id="CHEBI:29105"/>
    </ligand>
</feature>
<feature type="binding site" evidence="2">
    <location>
        <position position="31"/>
    </location>
    <ligand>
        <name>Zn(2+)</name>
        <dbReference type="ChEBI" id="CHEBI:29105"/>
    </ligand>
</feature>
<feature type="binding site" evidence="2">
    <location>
        <position position="34"/>
    </location>
    <ligand>
        <name>Zn(2+)</name>
        <dbReference type="ChEBI" id="CHEBI:29105"/>
    </ligand>
</feature>
<feature type="binding site" evidence="1">
    <location>
        <begin position="122"/>
        <end position="129"/>
    </location>
    <ligand>
        <name>ATP</name>
        <dbReference type="ChEBI" id="CHEBI:30616"/>
    </ligand>
</feature>
<organism>
    <name type="scientific">Chlamydia muridarum (strain MoPn / Nigg)</name>
    <dbReference type="NCBI Taxonomy" id="243161"/>
    <lineage>
        <taxon>Bacteria</taxon>
        <taxon>Pseudomonadati</taxon>
        <taxon>Chlamydiota</taxon>
        <taxon>Chlamydiia</taxon>
        <taxon>Chlamydiales</taxon>
        <taxon>Chlamydiaceae</taxon>
        <taxon>Chlamydia/Chlamydophila group</taxon>
        <taxon>Chlamydia</taxon>
    </lineage>
</organism>